<accession>B1WPK3</accession>
<keyword id="KW-0004">4Fe-4S</keyword>
<keyword id="KW-0408">Iron</keyword>
<keyword id="KW-0411">Iron-sulfur</keyword>
<keyword id="KW-0472">Membrane</keyword>
<keyword id="KW-0479">Metal-binding</keyword>
<keyword id="KW-0520">NAD</keyword>
<keyword id="KW-0521">NADP</keyword>
<keyword id="KW-0618">Plastoquinone</keyword>
<keyword id="KW-0874">Quinone</keyword>
<keyword id="KW-1185">Reference proteome</keyword>
<keyword id="KW-0677">Repeat</keyword>
<keyword id="KW-0793">Thylakoid</keyword>
<keyword id="KW-1278">Translocase</keyword>
<sequence length="196" mass="22471">MFSILKQVGDYAKGTVEAAKYIGQGLSVTFDHMRRRPVTVQYPYEKLIPSERYRGRIHFEFDKCIACEVCVRVCPINLPVVDWEFNKDAKKKELKHYSIDFGVCIFCGNCVEYCPTNCLSMTEEYELAAYDRHELNYDNVALGRLPYKVTQDPMVTPLRELGYLPKGVMSPHDLPEGSQRSGKRPEEIIEEAEASS</sequence>
<proteinExistence type="inferred from homology"/>
<reference key="1">
    <citation type="journal article" date="2008" name="Proc. Natl. Acad. Sci. U.S.A.">
        <title>The genome of Cyanothece 51142, a unicellular diazotrophic cyanobacterium important in the marine nitrogen cycle.</title>
        <authorList>
            <person name="Welsh E.A."/>
            <person name="Liberton M."/>
            <person name="Stoeckel J."/>
            <person name="Loh T."/>
            <person name="Elvitigala T."/>
            <person name="Wang C."/>
            <person name="Wollam A."/>
            <person name="Fulton R.S."/>
            <person name="Clifton S.W."/>
            <person name="Jacobs J.M."/>
            <person name="Aurora R."/>
            <person name="Ghosh B.K."/>
            <person name="Sherman L.A."/>
            <person name="Smith R.D."/>
            <person name="Wilson R.K."/>
            <person name="Pakrasi H.B."/>
        </authorList>
    </citation>
    <scope>NUCLEOTIDE SEQUENCE [LARGE SCALE GENOMIC DNA]</scope>
    <source>
        <strain>ATCC 51142 / BH68</strain>
    </source>
</reference>
<evidence type="ECO:0000255" key="1">
    <source>
        <dbReference type="HAMAP-Rule" id="MF_01351"/>
    </source>
</evidence>
<evidence type="ECO:0000256" key="2">
    <source>
        <dbReference type="SAM" id="MobiDB-lite"/>
    </source>
</evidence>
<dbReference type="EC" id="7.1.1.-" evidence="1"/>
<dbReference type="EMBL" id="CP000806">
    <property type="protein sequence ID" value="ACB51573.1"/>
    <property type="molecule type" value="Genomic_DNA"/>
</dbReference>
<dbReference type="RefSeq" id="WP_009546970.1">
    <property type="nucleotide sequence ID" value="NC_010546.1"/>
</dbReference>
<dbReference type="SMR" id="B1WPK3"/>
<dbReference type="STRING" id="43989.cce_2223"/>
<dbReference type="KEGG" id="cyt:cce_2223"/>
<dbReference type="eggNOG" id="COG1143">
    <property type="taxonomic scope" value="Bacteria"/>
</dbReference>
<dbReference type="HOGENOM" id="CLU_122804_0_0_3"/>
<dbReference type="OrthoDB" id="9798098at2"/>
<dbReference type="Proteomes" id="UP000001203">
    <property type="component" value="Chromosome circular"/>
</dbReference>
<dbReference type="GO" id="GO:0031676">
    <property type="term" value="C:plasma membrane-derived thylakoid membrane"/>
    <property type="evidence" value="ECO:0007669"/>
    <property type="project" value="UniProtKB-SubCell"/>
</dbReference>
<dbReference type="GO" id="GO:0051539">
    <property type="term" value="F:4 iron, 4 sulfur cluster binding"/>
    <property type="evidence" value="ECO:0007669"/>
    <property type="project" value="UniProtKB-KW"/>
</dbReference>
<dbReference type="GO" id="GO:0005506">
    <property type="term" value="F:iron ion binding"/>
    <property type="evidence" value="ECO:0007669"/>
    <property type="project" value="UniProtKB-UniRule"/>
</dbReference>
<dbReference type="GO" id="GO:0008137">
    <property type="term" value="F:NADH dehydrogenase (ubiquinone) activity"/>
    <property type="evidence" value="ECO:0007669"/>
    <property type="project" value="InterPro"/>
</dbReference>
<dbReference type="GO" id="GO:0048038">
    <property type="term" value="F:quinone binding"/>
    <property type="evidence" value="ECO:0007669"/>
    <property type="project" value="UniProtKB-KW"/>
</dbReference>
<dbReference type="GO" id="GO:0019684">
    <property type="term" value="P:photosynthesis, light reaction"/>
    <property type="evidence" value="ECO:0007669"/>
    <property type="project" value="UniProtKB-UniRule"/>
</dbReference>
<dbReference type="Gene3D" id="3.30.70.3270">
    <property type="match status" value="1"/>
</dbReference>
<dbReference type="HAMAP" id="MF_01351">
    <property type="entry name" value="NDH1_NuoI"/>
    <property type="match status" value="1"/>
</dbReference>
<dbReference type="InterPro" id="IPR017896">
    <property type="entry name" value="4Fe4S_Fe-S-bd"/>
</dbReference>
<dbReference type="InterPro" id="IPR017900">
    <property type="entry name" value="4Fe4S_Fe_S_CS"/>
</dbReference>
<dbReference type="InterPro" id="IPR010226">
    <property type="entry name" value="NADH_quinone_OxRdtase_chainI"/>
</dbReference>
<dbReference type="InterPro" id="IPR004497">
    <property type="entry name" value="NDHI"/>
</dbReference>
<dbReference type="NCBIfam" id="TIGR00403">
    <property type="entry name" value="ndhI"/>
    <property type="match status" value="1"/>
</dbReference>
<dbReference type="NCBIfam" id="TIGR01971">
    <property type="entry name" value="NuoI"/>
    <property type="match status" value="1"/>
</dbReference>
<dbReference type="NCBIfam" id="NF004537">
    <property type="entry name" value="PRK05888.1-3"/>
    <property type="match status" value="1"/>
</dbReference>
<dbReference type="PANTHER" id="PTHR47275">
    <property type="entry name" value="NAD(P)H-QUINONE OXIDOREDUCTASE SUBUNIT I, CHLOROPLASTIC"/>
    <property type="match status" value="1"/>
</dbReference>
<dbReference type="PANTHER" id="PTHR47275:SF1">
    <property type="entry name" value="NAD(P)H-QUINONE OXIDOREDUCTASE SUBUNIT I, CHLOROPLASTIC"/>
    <property type="match status" value="1"/>
</dbReference>
<dbReference type="Pfam" id="PF12838">
    <property type="entry name" value="Fer4_7"/>
    <property type="match status" value="1"/>
</dbReference>
<dbReference type="SUPFAM" id="SSF54862">
    <property type="entry name" value="4Fe-4S ferredoxins"/>
    <property type="match status" value="1"/>
</dbReference>
<dbReference type="PROSITE" id="PS00198">
    <property type="entry name" value="4FE4S_FER_1"/>
    <property type="match status" value="2"/>
</dbReference>
<dbReference type="PROSITE" id="PS51379">
    <property type="entry name" value="4FE4S_FER_2"/>
    <property type="match status" value="2"/>
</dbReference>
<organism>
    <name type="scientific">Crocosphaera subtropica (strain ATCC 51142 / BH68)</name>
    <name type="common">Cyanothece sp. (strain ATCC 51142)</name>
    <dbReference type="NCBI Taxonomy" id="43989"/>
    <lineage>
        <taxon>Bacteria</taxon>
        <taxon>Bacillati</taxon>
        <taxon>Cyanobacteriota</taxon>
        <taxon>Cyanophyceae</taxon>
        <taxon>Oscillatoriophycideae</taxon>
        <taxon>Chroococcales</taxon>
        <taxon>Aphanothecaceae</taxon>
        <taxon>Crocosphaera</taxon>
        <taxon>Crocosphaera subtropica</taxon>
    </lineage>
</organism>
<protein>
    <recommendedName>
        <fullName evidence="1">NAD(P)H-quinone oxidoreductase subunit I</fullName>
        <ecNumber evidence="1">7.1.1.-</ecNumber>
    </recommendedName>
    <alternativeName>
        <fullName evidence="1">NAD(P)H dehydrogenase I subunit I</fullName>
    </alternativeName>
    <alternativeName>
        <fullName evidence="1">NDH-1 subunit I</fullName>
        <shortName evidence="1">NDH-I</shortName>
    </alternativeName>
</protein>
<name>NDHI_CROS5</name>
<feature type="chain" id="PRO_1000166635" description="NAD(P)H-quinone oxidoreductase subunit I">
    <location>
        <begin position="1"/>
        <end position="196"/>
    </location>
</feature>
<feature type="domain" description="4Fe-4S ferredoxin-type 1" evidence="1">
    <location>
        <begin position="55"/>
        <end position="84"/>
    </location>
</feature>
<feature type="domain" description="4Fe-4S ferredoxin-type 2" evidence="1">
    <location>
        <begin position="95"/>
        <end position="124"/>
    </location>
</feature>
<feature type="region of interest" description="Disordered" evidence="2">
    <location>
        <begin position="170"/>
        <end position="196"/>
    </location>
</feature>
<feature type="binding site" evidence="1">
    <location>
        <position position="64"/>
    </location>
    <ligand>
        <name>[4Fe-4S] cluster</name>
        <dbReference type="ChEBI" id="CHEBI:49883"/>
        <label>1</label>
    </ligand>
</feature>
<feature type="binding site" evidence="1">
    <location>
        <position position="67"/>
    </location>
    <ligand>
        <name>[4Fe-4S] cluster</name>
        <dbReference type="ChEBI" id="CHEBI:49883"/>
        <label>1</label>
    </ligand>
</feature>
<feature type="binding site" evidence="1">
    <location>
        <position position="70"/>
    </location>
    <ligand>
        <name>[4Fe-4S] cluster</name>
        <dbReference type="ChEBI" id="CHEBI:49883"/>
        <label>1</label>
    </ligand>
</feature>
<feature type="binding site" evidence="1">
    <location>
        <position position="74"/>
    </location>
    <ligand>
        <name>[4Fe-4S] cluster</name>
        <dbReference type="ChEBI" id="CHEBI:49883"/>
        <label>2</label>
    </ligand>
</feature>
<feature type="binding site" evidence="1">
    <location>
        <position position="104"/>
    </location>
    <ligand>
        <name>[4Fe-4S] cluster</name>
        <dbReference type="ChEBI" id="CHEBI:49883"/>
        <label>2</label>
    </ligand>
</feature>
<feature type="binding site" evidence="1">
    <location>
        <position position="107"/>
    </location>
    <ligand>
        <name>[4Fe-4S] cluster</name>
        <dbReference type="ChEBI" id="CHEBI:49883"/>
        <label>2</label>
    </ligand>
</feature>
<feature type="binding site" evidence="1">
    <location>
        <position position="110"/>
    </location>
    <ligand>
        <name>[4Fe-4S] cluster</name>
        <dbReference type="ChEBI" id="CHEBI:49883"/>
        <label>2</label>
    </ligand>
</feature>
<feature type="binding site" evidence="1">
    <location>
        <position position="114"/>
    </location>
    <ligand>
        <name>[4Fe-4S] cluster</name>
        <dbReference type="ChEBI" id="CHEBI:49883"/>
        <label>1</label>
    </ligand>
</feature>
<gene>
    <name evidence="1" type="primary">ndhI</name>
    <name type="ordered locus">cce_2223</name>
</gene>
<comment type="function">
    <text evidence="1">NDH-1 shuttles electrons from an unknown electron donor, via FMN and iron-sulfur (Fe-S) centers, to quinones in the respiratory and/or the photosynthetic chain. The immediate electron acceptor for the enzyme in this species is believed to be plastoquinone. Couples the redox reaction to proton translocation, and thus conserves the redox energy in a proton gradient.</text>
</comment>
<comment type="catalytic activity">
    <reaction evidence="1">
        <text>a plastoquinone + NADH + (n+1) H(+)(in) = a plastoquinol + NAD(+) + n H(+)(out)</text>
        <dbReference type="Rhea" id="RHEA:42608"/>
        <dbReference type="Rhea" id="RHEA-COMP:9561"/>
        <dbReference type="Rhea" id="RHEA-COMP:9562"/>
        <dbReference type="ChEBI" id="CHEBI:15378"/>
        <dbReference type="ChEBI" id="CHEBI:17757"/>
        <dbReference type="ChEBI" id="CHEBI:57540"/>
        <dbReference type="ChEBI" id="CHEBI:57945"/>
        <dbReference type="ChEBI" id="CHEBI:62192"/>
    </reaction>
</comment>
<comment type="catalytic activity">
    <reaction evidence="1">
        <text>a plastoquinone + NADPH + (n+1) H(+)(in) = a plastoquinol + NADP(+) + n H(+)(out)</text>
        <dbReference type="Rhea" id="RHEA:42612"/>
        <dbReference type="Rhea" id="RHEA-COMP:9561"/>
        <dbReference type="Rhea" id="RHEA-COMP:9562"/>
        <dbReference type="ChEBI" id="CHEBI:15378"/>
        <dbReference type="ChEBI" id="CHEBI:17757"/>
        <dbReference type="ChEBI" id="CHEBI:57783"/>
        <dbReference type="ChEBI" id="CHEBI:58349"/>
        <dbReference type="ChEBI" id="CHEBI:62192"/>
    </reaction>
</comment>
<comment type="cofactor">
    <cofactor evidence="1">
        <name>[4Fe-4S] cluster</name>
        <dbReference type="ChEBI" id="CHEBI:49883"/>
    </cofactor>
    <text evidence="1">Binds 2 [4Fe-4S] clusters per subunit.</text>
</comment>
<comment type="subunit">
    <text evidence="1">NDH-1 is composed of at least 11 different subunits.</text>
</comment>
<comment type="subcellular location">
    <subcellularLocation>
        <location evidence="1">Cellular thylakoid membrane</location>
        <topology evidence="1">Peripheral membrane protein</topology>
    </subcellularLocation>
</comment>
<comment type="similarity">
    <text evidence="1">Belongs to the complex I 23 kDa subunit family.</text>
</comment>